<proteinExistence type="inferred from homology"/>
<feature type="chain" id="PRO_0000255644" description="DNA integrity scanning protein DisA">
    <location>
        <begin position="1"/>
        <end position="366"/>
    </location>
</feature>
<feature type="domain" description="DAC" evidence="2">
    <location>
        <begin position="21"/>
        <end position="159"/>
    </location>
</feature>
<feature type="binding site" evidence="1">
    <location>
        <position position="88"/>
    </location>
    <ligand>
        <name>ATP</name>
        <dbReference type="ChEBI" id="CHEBI:30616"/>
    </ligand>
</feature>
<feature type="binding site" evidence="1">
    <location>
        <position position="106"/>
    </location>
    <ligand>
        <name>ATP</name>
        <dbReference type="ChEBI" id="CHEBI:30616"/>
    </ligand>
</feature>
<feature type="binding site" evidence="1">
    <location>
        <begin position="119"/>
        <end position="123"/>
    </location>
    <ligand>
        <name>ATP</name>
        <dbReference type="ChEBI" id="CHEBI:30616"/>
    </ligand>
</feature>
<comment type="function">
    <text evidence="1">Participates in a DNA-damage check-point. DisA forms globular foci that rapidly scan along the chromosomes searching for lesions.</text>
</comment>
<comment type="function">
    <text evidence="1">Also has diadenylate cyclase activity, catalyzing the condensation of 2 ATP molecules into cyclic di-AMP (c-di-AMP). c-di-AMP likely acts as a signaling molecule that may couple DNA integrity with a cellular process.</text>
</comment>
<comment type="catalytic activity">
    <reaction evidence="1">
        <text>2 ATP = 3',3'-c-di-AMP + 2 diphosphate</text>
        <dbReference type="Rhea" id="RHEA:35655"/>
        <dbReference type="ChEBI" id="CHEBI:30616"/>
        <dbReference type="ChEBI" id="CHEBI:33019"/>
        <dbReference type="ChEBI" id="CHEBI:71500"/>
        <dbReference type="EC" id="2.7.7.85"/>
    </reaction>
</comment>
<comment type="cofactor">
    <cofactor evidence="1">
        <name>Mg(2+)</name>
        <dbReference type="ChEBI" id="CHEBI:18420"/>
    </cofactor>
</comment>
<comment type="subunit">
    <text evidence="1">Homooctamer.</text>
</comment>
<comment type="similarity">
    <text evidence="1">Belongs to the DisA family.</text>
</comment>
<reference key="1">
    <citation type="journal article" date="2003" name="Appl. Microbiol. Biotechnol.">
        <title>The Corynebacterium glutamicum genome: features and impacts on biotechnological processes.</title>
        <authorList>
            <person name="Ikeda M."/>
            <person name="Nakagawa S."/>
        </authorList>
    </citation>
    <scope>NUCLEOTIDE SEQUENCE [LARGE SCALE GENOMIC DNA]</scope>
    <source>
        <strain>ATCC 13032 / DSM 20300 / JCM 1318 / BCRC 11384 / CCUG 27702 / LMG 3730 / NBRC 12168 / NCIMB 10025 / NRRL B-2784 / 534</strain>
    </source>
</reference>
<reference key="2">
    <citation type="journal article" date="2003" name="J. Biotechnol.">
        <title>The complete Corynebacterium glutamicum ATCC 13032 genome sequence and its impact on the production of L-aspartate-derived amino acids and vitamins.</title>
        <authorList>
            <person name="Kalinowski J."/>
            <person name="Bathe B."/>
            <person name="Bartels D."/>
            <person name="Bischoff N."/>
            <person name="Bott M."/>
            <person name="Burkovski A."/>
            <person name="Dusch N."/>
            <person name="Eggeling L."/>
            <person name="Eikmanns B.J."/>
            <person name="Gaigalat L."/>
            <person name="Goesmann A."/>
            <person name="Hartmann M."/>
            <person name="Huthmacher K."/>
            <person name="Kraemer R."/>
            <person name="Linke B."/>
            <person name="McHardy A.C."/>
            <person name="Meyer F."/>
            <person name="Moeckel B."/>
            <person name="Pfefferle W."/>
            <person name="Puehler A."/>
            <person name="Rey D.A."/>
            <person name="Rueckert C."/>
            <person name="Rupp O."/>
            <person name="Sahm H."/>
            <person name="Wendisch V.F."/>
            <person name="Wiegraebe I."/>
            <person name="Tauch A."/>
        </authorList>
    </citation>
    <scope>NUCLEOTIDE SEQUENCE [LARGE SCALE GENOMIC DNA]</scope>
    <source>
        <strain>ATCC 13032 / DSM 20300 / JCM 1318 / BCRC 11384 / CCUG 27702 / LMG 3730 / NBRC 12168 / NCIMB 10025 / NRRL B-2784 / 534</strain>
    </source>
</reference>
<organism>
    <name type="scientific">Corynebacterium glutamicum (strain ATCC 13032 / DSM 20300 / JCM 1318 / BCRC 11384 / CCUG 27702 / LMG 3730 / NBRC 12168 / NCIMB 10025 / NRRL B-2784 / 534)</name>
    <dbReference type="NCBI Taxonomy" id="196627"/>
    <lineage>
        <taxon>Bacteria</taxon>
        <taxon>Bacillati</taxon>
        <taxon>Actinomycetota</taxon>
        <taxon>Actinomycetes</taxon>
        <taxon>Mycobacteriales</taxon>
        <taxon>Corynebacteriaceae</taxon>
        <taxon>Corynebacterium</taxon>
    </lineage>
</organism>
<protein>
    <recommendedName>
        <fullName evidence="1">DNA integrity scanning protein DisA</fullName>
    </recommendedName>
    <alternativeName>
        <fullName evidence="1">Cyclic di-AMP synthase</fullName>
        <shortName evidence="1">c-di-AMP synthase</shortName>
    </alternativeName>
    <alternativeName>
        <fullName evidence="1">Diadenylate cyclase</fullName>
        <ecNumber evidence="1">2.7.7.85</ecNumber>
    </alternativeName>
</protein>
<name>DISA_CORGL</name>
<gene>
    <name evidence="1" type="primary">disA</name>
    <name type="ordered locus">Cgl2666</name>
    <name type="ordered locus">cg2951</name>
</gene>
<sequence>MTPTTTPVSNPDALSTGTQDVHTLKGTLQRLAPGTPLRDGLDRIVRGHTGALIVIGDDENVSSICDGGFEFDVSFAATRLRELCKMDGAVILSSDLERIKRANVQLLPSPTWPTQESGTRHRSAERTALHTGVPVIAVSESQNTITLYVEGKSHMLEQPAALLNRANQALGTMERYRDRLDQVNNRLHLAELHSYVTVIDVVSVIQREEMLRRVGEIIDGDVLELGKDAKEIQIQLSELRGDNDRERESIIADYLVTDGIPADEEIHAALEAISHLDDKALLNPANIARVLGLPPTEEALDEPVTPRGYRTLNRIPRVQKFLMDKLIVEFGNLDALLNASVEDLSAVDGVGSLWARHITDGLGRLS</sequence>
<keyword id="KW-0067">ATP-binding</keyword>
<keyword id="KW-0227">DNA damage</keyword>
<keyword id="KW-0234">DNA repair</keyword>
<keyword id="KW-0238">DNA-binding</keyword>
<keyword id="KW-0460">Magnesium</keyword>
<keyword id="KW-0547">Nucleotide-binding</keyword>
<keyword id="KW-0548">Nucleotidyltransferase</keyword>
<keyword id="KW-1185">Reference proteome</keyword>
<keyword id="KW-0808">Transferase</keyword>
<dbReference type="EC" id="2.7.7.85" evidence="1"/>
<dbReference type="EMBL" id="BA000036">
    <property type="protein sequence ID" value="BAC00060.1"/>
    <property type="molecule type" value="Genomic_DNA"/>
</dbReference>
<dbReference type="EMBL" id="BX927156">
    <property type="protein sequence ID" value="CAF20690.1"/>
    <property type="molecule type" value="Genomic_DNA"/>
</dbReference>
<dbReference type="RefSeq" id="NP_601865.1">
    <property type="nucleotide sequence ID" value="NC_003450.3"/>
</dbReference>
<dbReference type="RefSeq" id="WP_011015293.1">
    <property type="nucleotide sequence ID" value="NC_006958.1"/>
</dbReference>
<dbReference type="SMR" id="Q8NMB2"/>
<dbReference type="STRING" id="196627.cg2951"/>
<dbReference type="GeneID" id="1020615"/>
<dbReference type="KEGG" id="cgb:cg2951"/>
<dbReference type="KEGG" id="cgl:Cgl2666"/>
<dbReference type="PATRIC" id="fig|196627.13.peg.2601"/>
<dbReference type="eggNOG" id="COG1623">
    <property type="taxonomic scope" value="Bacteria"/>
</dbReference>
<dbReference type="HOGENOM" id="CLU_787128_0_0_11"/>
<dbReference type="OrthoDB" id="41841at2"/>
<dbReference type="BioCyc" id="CORYNE:G18NG-12283-MONOMER"/>
<dbReference type="Proteomes" id="UP000000582">
    <property type="component" value="Chromosome"/>
</dbReference>
<dbReference type="Proteomes" id="UP000001009">
    <property type="component" value="Chromosome"/>
</dbReference>
<dbReference type="GO" id="GO:0004016">
    <property type="term" value="F:adenylate cyclase activity"/>
    <property type="evidence" value="ECO:0007669"/>
    <property type="project" value="TreeGrafter"/>
</dbReference>
<dbReference type="GO" id="GO:0005524">
    <property type="term" value="F:ATP binding"/>
    <property type="evidence" value="ECO:0007669"/>
    <property type="project" value="UniProtKB-UniRule"/>
</dbReference>
<dbReference type="GO" id="GO:0106408">
    <property type="term" value="F:diadenylate cyclase activity"/>
    <property type="evidence" value="ECO:0007669"/>
    <property type="project" value="UniProtKB-EC"/>
</dbReference>
<dbReference type="GO" id="GO:0003677">
    <property type="term" value="F:DNA binding"/>
    <property type="evidence" value="ECO:0007669"/>
    <property type="project" value="UniProtKB-UniRule"/>
</dbReference>
<dbReference type="GO" id="GO:0006281">
    <property type="term" value="P:DNA repair"/>
    <property type="evidence" value="ECO:0007669"/>
    <property type="project" value="UniProtKB-UniRule"/>
</dbReference>
<dbReference type="Gene3D" id="1.10.150.20">
    <property type="entry name" value="5' to 3' exonuclease, C-terminal subdomain"/>
    <property type="match status" value="1"/>
</dbReference>
<dbReference type="Gene3D" id="1.20.1260.110">
    <property type="entry name" value="DNA integrity scanning linker region"/>
    <property type="match status" value="1"/>
</dbReference>
<dbReference type="Gene3D" id="3.40.1700.10">
    <property type="entry name" value="DNA integrity scanning protein, DisA, N-terminal domain"/>
    <property type="match status" value="1"/>
</dbReference>
<dbReference type="HAMAP" id="MF_01438">
    <property type="entry name" value="DisA"/>
    <property type="match status" value="1"/>
</dbReference>
<dbReference type="InterPro" id="IPR050338">
    <property type="entry name" value="DisA"/>
</dbReference>
<dbReference type="InterPro" id="IPR041663">
    <property type="entry name" value="DisA/LigA_HHH"/>
</dbReference>
<dbReference type="InterPro" id="IPR038331">
    <property type="entry name" value="DisA_sf"/>
</dbReference>
<dbReference type="InterPro" id="IPR036888">
    <property type="entry name" value="DNA_integrity_DisA_N_sf"/>
</dbReference>
<dbReference type="InterPro" id="IPR018906">
    <property type="entry name" value="DNA_integrity_scan_DisA_link"/>
</dbReference>
<dbReference type="InterPro" id="IPR003390">
    <property type="entry name" value="DNA_integrity_scan_DisA_N"/>
</dbReference>
<dbReference type="InterPro" id="IPR023763">
    <property type="entry name" value="DNA_integrity_scanning_protein"/>
</dbReference>
<dbReference type="InterPro" id="IPR010994">
    <property type="entry name" value="RuvA_2-like"/>
</dbReference>
<dbReference type="NCBIfam" id="NF010009">
    <property type="entry name" value="PRK13482.1"/>
    <property type="match status" value="1"/>
</dbReference>
<dbReference type="PANTHER" id="PTHR34185">
    <property type="entry name" value="DIADENYLATE CYCLASE"/>
    <property type="match status" value="1"/>
</dbReference>
<dbReference type="PANTHER" id="PTHR34185:SF3">
    <property type="entry name" value="DNA INTEGRITY SCANNING PROTEIN DISA"/>
    <property type="match status" value="1"/>
</dbReference>
<dbReference type="Pfam" id="PF02457">
    <property type="entry name" value="DAC"/>
    <property type="match status" value="1"/>
</dbReference>
<dbReference type="Pfam" id="PF10635">
    <property type="entry name" value="DisA-linker"/>
    <property type="match status" value="1"/>
</dbReference>
<dbReference type="Pfam" id="PF12826">
    <property type="entry name" value="HHH_2"/>
    <property type="match status" value="1"/>
</dbReference>
<dbReference type="SUPFAM" id="SSF47781">
    <property type="entry name" value="RuvA domain 2-like"/>
    <property type="match status" value="1"/>
</dbReference>
<dbReference type="SUPFAM" id="SSF143597">
    <property type="entry name" value="YojJ-like"/>
    <property type="match status" value="1"/>
</dbReference>
<dbReference type="PROSITE" id="PS51794">
    <property type="entry name" value="DAC"/>
    <property type="match status" value="1"/>
</dbReference>
<evidence type="ECO:0000255" key="1">
    <source>
        <dbReference type="HAMAP-Rule" id="MF_01438"/>
    </source>
</evidence>
<evidence type="ECO:0000255" key="2">
    <source>
        <dbReference type="PROSITE-ProRule" id="PRU01130"/>
    </source>
</evidence>
<accession>Q8NMB2</accession>
<accession>Q6M2H8</accession>